<sequence length="176" mass="18616">MELVVGRVVKSHGVTGEVVVEIRTDDPADRFAPGTRLRAKGPFDGGAEGSAVSYVIESVRQHGGRLLVRLAGVADRDAADALRGSLFVIDADDLPPIDEPDTYYDHQLVGLMVQTATGEGVGVVTEVVHTAAGELLAVKRDSDEVLVPFVRAIVTSVSLDDGIVEIDPPHGLLNLE</sequence>
<accession>A1KMQ1</accession>
<feature type="chain" id="PRO_1000001196" description="Ribosome maturation factor RimM">
    <location>
        <begin position="1"/>
        <end position="176"/>
    </location>
</feature>
<feature type="domain" description="PRC barrel" evidence="1">
    <location>
        <begin position="100"/>
        <end position="172"/>
    </location>
</feature>
<proteinExistence type="inferred from homology"/>
<comment type="function">
    <text evidence="1">An accessory protein needed during the final step in the assembly of 30S ribosomal subunit, possibly for assembly of the head region. Essential for efficient processing of 16S rRNA. May be needed both before and after RbfA during the maturation of 16S rRNA. It has affinity for free ribosomal 30S subunits but not for 70S ribosomes.</text>
</comment>
<comment type="subunit">
    <text evidence="1">Binds ribosomal protein uS19.</text>
</comment>
<comment type="subcellular location">
    <subcellularLocation>
        <location evidence="1">Cytoplasm</location>
    </subcellularLocation>
</comment>
<comment type="domain">
    <text evidence="1">The PRC barrel domain binds ribosomal protein uS19.</text>
</comment>
<comment type="similarity">
    <text evidence="1">Belongs to the RimM family.</text>
</comment>
<name>RIMM_MYCBP</name>
<gene>
    <name evidence="1" type="primary">rimM</name>
    <name type="ordered locus">BCG_2928c</name>
</gene>
<reference key="1">
    <citation type="journal article" date="2007" name="Proc. Natl. Acad. Sci. U.S.A.">
        <title>Genome plasticity of BCG and impact on vaccine efficacy.</title>
        <authorList>
            <person name="Brosch R."/>
            <person name="Gordon S.V."/>
            <person name="Garnier T."/>
            <person name="Eiglmeier K."/>
            <person name="Frigui W."/>
            <person name="Valenti P."/>
            <person name="Dos Santos S."/>
            <person name="Duthoy S."/>
            <person name="Lacroix C."/>
            <person name="Garcia-Pelayo C."/>
            <person name="Inwald J.K."/>
            <person name="Golby P."/>
            <person name="Garcia J.N."/>
            <person name="Hewinson R.G."/>
            <person name="Behr M.A."/>
            <person name="Quail M.A."/>
            <person name="Churcher C."/>
            <person name="Barrell B.G."/>
            <person name="Parkhill J."/>
            <person name="Cole S.T."/>
        </authorList>
    </citation>
    <scope>NUCLEOTIDE SEQUENCE [LARGE SCALE GENOMIC DNA]</scope>
    <source>
        <strain>BCG / Pasteur 1173P2</strain>
    </source>
</reference>
<dbReference type="EMBL" id="AM408590">
    <property type="protein sequence ID" value="CAL72917.1"/>
    <property type="molecule type" value="Genomic_DNA"/>
</dbReference>
<dbReference type="RefSeq" id="WP_003414726.1">
    <property type="nucleotide sequence ID" value="NC_008769.1"/>
</dbReference>
<dbReference type="SMR" id="A1KMQ1"/>
<dbReference type="GeneID" id="45426894"/>
<dbReference type="KEGG" id="mbb:BCG_2928c"/>
<dbReference type="HOGENOM" id="CLU_077636_0_0_11"/>
<dbReference type="Proteomes" id="UP000001472">
    <property type="component" value="Chromosome"/>
</dbReference>
<dbReference type="GO" id="GO:0005737">
    <property type="term" value="C:cytoplasm"/>
    <property type="evidence" value="ECO:0007669"/>
    <property type="project" value="UniProtKB-SubCell"/>
</dbReference>
<dbReference type="GO" id="GO:0005840">
    <property type="term" value="C:ribosome"/>
    <property type="evidence" value="ECO:0007669"/>
    <property type="project" value="InterPro"/>
</dbReference>
<dbReference type="GO" id="GO:0043022">
    <property type="term" value="F:ribosome binding"/>
    <property type="evidence" value="ECO:0007669"/>
    <property type="project" value="InterPro"/>
</dbReference>
<dbReference type="GO" id="GO:0042274">
    <property type="term" value="P:ribosomal small subunit biogenesis"/>
    <property type="evidence" value="ECO:0007669"/>
    <property type="project" value="UniProtKB-UniRule"/>
</dbReference>
<dbReference type="GO" id="GO:0006364">
    <property type="term" value="P:rRNA processing"/>
    <property type="evidence" value="ECO:0007669"/>
    <property type="project" value="UniProtKB-UniRule"/>
</dbReference>
<dbReference type="Gene3D" id="2.30.30.240">
    <property type="entry name" value="PRC-barrel domain"/>
    <property type="match status" value="1"/>
</dbReference>
<dbReference type="Gene3D" id="2.40.30.60">
    <property type="entry name" value="RimM"/>
    <property type="match status" value="1"/>
</dbReference>
<dbReference type="HAMAP" id="MF_00014">
    <property type="entry name" value="Ribosome_mat_RimM"/>
    <property type="match status" value="1"/>
</dbReference>
<dbReference type="InterPro" id="IPR011033">
    <property type="entry name" value="PRC_barrel-like_sf"/>
</dbReference>
<dbReference type="InterPro" id="IPR056792">
    <property type="entry name" value="PRC_RimM"/>
</dbReference>
<dbReference type="InterPro" id="IPR011961">
    <property type="entry name" value="RimM"/>
</dbReference>
<dbReference type="InterPro" id="IPR002676">
    <property type="entry name" value="RimM_N"/>
</dbReference>
<dbReference type="InterPro" id="IPR036976">
    <property type="entry name" value="RimM_N_sf"/>
</dbReference>
<dbReference type="InterPro" id="IPR009000">
    <property type="entry name" value="Transl_B-barrel_sf"/>
</dbReference>
<dbReference type="NCBIfam" id="TIGR02273">
    <property type="entry name" value="16S_RimM"/>
    <property type="match status" value="1"/>
</dbReference>
<dbReference type="PANTHER" id="PTHR33692">
    <property type="entry name" value="RIBOSOME MATURATION FACTOR RIMM"/>
    <property type="match status" value="1"/>
</dbReference>
<dbReference type="PANTHER" id="PTHR33692:SF1">
    <property type="entry name" value="RIBOSOME MATURATION FACTOR RIMM"/>
    <property type="match status" value="1"/>
</dbReference>
<dbReference type="Pfam" id="PF24986">
    <property type="entry name" value="PRC_RimM"/>
    <property type="match status" value="1"/>
</dbReference>
<dbReference type="Pfam" id="PF01782">
    <property type="entry name" value="RimM"/>
    <property type="match status" value="1"/>
</dbReference>
<dbReference type="SUPFAM" id="SSF50346">
    <property type="entry name" value="PRC-barrel domain"/>
    <property type="match status" value="1"/>
</dbReference>
<dbReference type="SUPFAM" id="SSF50447">
    <property type="entry name" value="Translation proteins"/>
    <property type="match status" value="1"/>
</dbReference>
<keyword id="KW-0143">Chaperone</keyword>
<keyword id="KW-0963">Cytoplasm</keyword>
<keyword id="KW-0690">Ribosome biogenesis</keyword>
<keyword id="KW-0698">rRNA processing</keyword>
<organism>
    <name type="scientific">Mycobacterium bovis (strain BCG / Pasteur 1173P2)</name>
    <dbReference type="NCBI Taxonomy" id="410289"/>
    <lineage>
        <taxon>Bacteria</taxon>
        <taxon>Bacillati</taxon>
        <taxon>Actinomycetota</taxon>
        <taxon>Actinomycetes</taxon>
        <taxon>Mycobacteriales</taxon>
        <taxon>Mycobacteriaceae</taxon>
        <taxon>Mycobacterium</taxon>
        <taxon>Mycobacterium tuberculosis complex</taxon>
    </lineage>
</organism>
<protein>
    <recommendedName>
        <fullName evidence="1">Ribosome maturation factor RimM</fullName>
    </recommendedName>
</protein>
<evidence type="ECO:0000255" key="1">
    <source>
        <dbReference type="HAMAP-Rule" id="MF_00014"/>
    </source>
</evidence>